<sequence>MADQRFYATGKRKTAVARVWLKPGSGSVTINKRTIEEYIDRETSKMVIYQPLVLTGTFGKLDVTVNVLGGGGSGQAGAIRHGISKALLEFNPEFREVLKRAGFLTRDSRVKERKKYGRRSARARFQYSKR</sequence>
<proteinExistence type="inferred from homology"/>
<feature type="chain" id="PRO_1000051351" description="Small ribosomal subunit protein uS9">
    <location>
        <begin position="1"/>
        <end position="130"/>
    </location>
</feature>
<reference key="1">
    <citation type="submission" date="2006-10" db="EMBL/GenBank/DDBJ databases">
        <title>Complete sequence of Syntrophobacter fumaroxidans MPOB.</title>
        <authorList>
            <consortium name="US DOE Joint Genome Institute"/>
            <person name="Copeland A."/>
            <person name="Lucas S."/>
            <person name="Lapidus A."/>
            <person name="Barry K."/>
            <person name="Detter J.C."/>
            <person name="Glavina del Rio T."/>
            <person name="Hammon N."/>
            <person name="Israni S."/>
            <person name="Pitluck S."/>
            <person name="Goltsman E.G."/>
            <person name="Martinez M."/>
            <person name="Schmutz J."/>
            <person name="Larimer F."/>
            <person name="Land M."/>
            <person name="Hauser L."/>
            <person name="Kyrpides N."/>
            <person name="Kim E."/>
            <person name="Boone D.R."/>
            <person name="Brockman F."/>
            <person name="Culley D."/>
            <person name="Ferry J."/>
            <person name="Gunsalus R."/>
            <person name="McInerney M.J."/>
            <person name="Morrison M."/>
            <person name="Plugge C."/>
            <person name="Rohlin L."/>
            <person name="Scholten J."/>
            <person name="Sieber J."/>
            <person name="Stams A.J.M."/>
            <person name="Worm P."/>
            <person name="Henstra A.M."/>
            <person name="Richardson P."/>
        </authorList>
    </citation>
    <scope>NUCLEOTIDE SEQUENCE [LARGE SCALE GENOMIC DNA]</scope>
    <source>
        <strain>DSM 10017 / MPOB</strain>
    </source>
</reference>
<keyword id="KW-1185">Reference proteome</keyword>
<keyword id="KW-0687">Ribonucleoprotein</keyword>
<keyword id="KW-0689">Ribosomal protein</keyword>
<name>RS9_SYNFM</name>
<dbReference type="EMBL" id="CP000478">
    <property type="protein sequence ID" value="ABK17355.1"/>
    <property type="molecule type" value="Genomic_DNA"/>
</dbReference>
<dbReference type="RefSeq" id="WP_011698525.1">
    <property type="nucleotide sequence ID" value="NC_008554.1"/>
</dbReference>
<dbReference type="SMR" id="A0LIV3"/>
<dbReference type="FunCoup" id="A0LIV3">
    <property type="interactions" value="700"/>
</dbReference>
<dbReference type="STRING" id="335543.Sfum_1668"/>
<dbReference type="KEGG" id="sfu:Sfum_1668"/>
<dbReference type="eggNOG" id="COG0103">
    <property type="taxonomic scope" value="Bacteria"/>
</dbReference>
<dbReference type="HOGENOM" id="CLU_046483_2_1_7"/>
<dbReference type="InParanoid" id="A0LIV3"/>
<dbReference type="OrthoDB" id="9803965at2"/>
<dbReference type="Proteomes" id="UP000001784">
    <property type="component" value="Chromosome"/>
</dbReference>
<dbReference type="GO" id="GO:0022627">
    <property type="term" value="C:cytosolic small ribosomal subunit"/>
    <property type="evidence" value="ECO:0007669"/>
    <property type="project" value="TreeGrafter"/>
</dbReference>
<dbReference type="GO" id="GO:0003723">
    <property type="term" value="F:RNA binding"/>
    <property type="evidence" value="ECO:0007669"/>
    <property type="project" value="TreeGrafter"/>
</dbReference>
<dbReference type="GO" id="GO:0003735">
    <property type="term" value="F:structural constituent of ribosome"/>
    <property type="evidence" value="ECO:0007669"/>
    <property type="project" value="InterPro"/>
</dbReference>
<dbReference type="GO" id="GO:0006412">
    <property type="term" value="P:translation"/>
    <property type="evidence" value="ECO:0007669"/>
    <property type="project" value="UniProtKB-UniRule"/>
</dbReference>
<dbReference type="FunFam" id="3.30.230.10:FF:000001">
    <property type="entry name" value="30S ribosomal protein S9"/>
    <property type="match status" value="1"/>
</dbReference>
<dbReference type="Gene3D" id="3.30.230.10">
    <property type="match status" value="1"/>
</dbReference>
<dbReference type="HAMAP" id="MF_00532_B">
    <property type="entry name" value="Ribosomal_uS9_B"/>
    <property type="match status" value="1"/>
</dbReference>
<dbReference type="InterPro" id="IPR020568">
    <property type="entry name" value="Ribosomal_Su5_D2-typ_SF"/>
</dbReference>
<dbReference type="InterPro" id="IPR000754">
    <property type="entry name" value="Ribosomal_uS9"/>
</dbReference>
<dbReference type="InterPro" id="IPR023035">
    <property type="entry name" value="Ribosomal_uS9_bac/plastid"/>
</dbReference>
<dbReference type="InterPro" id="IPR020574">
    <property type="entry name" value="Ribosomal_uS9_CS"/>
</dbReference>
<dbReference type="InterPro" id="IPR014721">
    <property type="entry name" value="Ribsml_uS5_D2-typ_fold_subgr"/>
</dbReference>
<dbReference type="NCBIfam" id="NF001099">
    <property type="entry name" value="PRK00132.1"/>
    <property type="match status" value="1"/>
</dbReference>
<dbReference type="PANTHER" id="PTHR21569">
    <property type="entry name" value="RIBOSOMAL PROTEIN S9"/>
    <property type="match status" value="1"/>
</dbReference>
<dbReference type="PANTHER" id="PTHR21569:SF1">
    <property type="entry name" value="SMALL RIBOSOMAL SUBUNIT PROTEIN US9M"/>
    <property type="match status" value="1"/>
</dbReference>
<dbReference type="Pfam" id="PF00380">
    <property type="entry name" value="Ribosomal_S9"/>
    <property type="match status" value="1"/>
</dbReference>
<dbReference type="SUPFAM" id="SSF54211">
    <property type="entry name" value="Ribosomal protein S5 domain 2-like"/>
    <property type="match status" value="1"/>
</dbReference>
<dbReference type="PROSITE" id="PS00360">
    <property type="entry name" value="RIBOSOMAL_S9"/>
    <property type="match status" value="1"/>
</dbReference>
<accession>A0LIV3</accession>
<gene>
    <name evidence="1" type="primary">rpsI</name>
    <name type="ordered locus">Sfum_1668</name>
</gene>
<organism>
    <name type="scientific">Syntrophobacter fumaroxidans (strain DSM 10017 / MPOB)</name>
    <dbReference type="NCBI Taxonomy" id="335543"/>
    <lineage>
        <taxon>Bacteria</taxon>
        <taxon>Pseudomonadati</taxon>
        <taxon>Thermodesulfobacteriota</taxon>
        <taxon>Syntrophobacteria</taxon>
        <taxon>Syntrophobacterales</taxon>
        <taxon>Syntrophobacteraceae</taxon>
        <taxon>Syntrophobacter</taxon>
    </lineage>
</organism>
<protein>
    <recommendedName>
        <fullName evidence="1">Small ribosomal subunit protein uS9</fullName>
    </recommendedName>
    <alternativeName>
        <fullName evidence="2">30S ribosomal protein S9</fullName>
    </alternativeName>
</protein>
<evidence type="ECO:0000255" key="1">
    <source>
        <dbReference type="HAMAP-Rule" id="MF_00532"/>
    </source>
</evidence>
<evidence type="ECO:0000305" key="2"/>
<comment type="similarity">
    <text evidence="1">Belongs to the universal ribosomal protein uS9 family.</text>
</comment>